<gene>
    <name evidence="1" type="primary">menD</name>
    <name type="ordered locus">ECA1211</name>
</gene>
<keyword id="KW-0460">Magnesium</keyword>
<keyword id="KW-0464">Manganese</keyword>
<keyword id="KW-0474">Menaquinone biosynthesis</keyword>
<keyword id="KW-0479">Metal-binding</keyword>
<keyword id="KW-1185">Reference proteome</keyword>
<keyword id="KW-0786">Thiamine pyrophosphate</keyword>
<keyword id="KW-0808">Transferase</keyword>
<feature type="chain" id="PRO_0000341737" description="2-succinyl-5-enolpyruvyl-6-hydroxy-3-cyclohexene-1-carboxylate synthase">
    <location>
        <begin position="1"/>
        <end position="560"/>
    </location>
</feature>
<sequence>MSTSVFNRRWATLLLESLTRHGVRHICIAPGSRSTPLTLSAADNHALICHTHFDERGLGHLALGLAKASREPVAIIVTSGTAAANLYPAIIEAGLTGERLVVLTADRPPELIDCGANQAIRQHALYASHPTLALDLPRPTPDIPATWLVSSVDSAMARLTHGALHINCPFAEPLYGADDGTAYQDWLMTLGDWWNSREPWLREMRQSTLVVQPDWPQWRQKRGVVLAGRVSAEQGARLAAWANELGWPLIGDVLSQSGQPLPCADIWLAHPEAASLLRQAEIVLQFGGSLTGKRLLQWQEQCQPQEFWLIDDLPGRLDPAHHRGRRLVADVGEWLSAHPADKQTPWADLLVDIADRTQRQVDAHLASHFGEAQLAQRIPALLPPDGQLFVGNSLVVRLIDALAQLPQGYPVYGNRGASGIDGLISTLAGVQRATAKATLGIVGDLSALYDLNALALLRQSPAPLVLIVVNNNGGQIFSLLPTPVAQREAFYCMPQNVEFGHAAAMFGLNYVRAESWEQLADTVSDCWTQGGVTLLEVVVEPKDGAETLNELVAQVAAWTH</sequence>
<evidence type="ECO:0000255" key="1">
    <source>
        <dbReference type="HAMAP-Rule" id="MF_01659"/>
    </source>
</evidence>
<name>MEND_PECAS</name>
<comment type="function">
    <text evidence="1">Catalyzes the thiamine diphosphate-dependent decarboxylation of 2-oxoglutarate and the subsequent addition of the resulting succinic semialdehyde-thiamine pyrophosphate anion to isochorismate to yield 2-succinyl-5-enolpyruvyl-6-hydroxy-3-cyclohexene-1-carboxylate (SEPHCHC).</text>
</comment>
<comment type="catalytic activity">
    <reaction evidence="1">
        <text>isochorismate + 2-oxoglutarate + H(+) = 5-enolpyruvoyl-6-hydroxy-2-succinyl-cyclohex-3-ene-1-carboxylate + CO2</text>
        <dbReference type="Rhea" id="RHEA:25593"/>
        <dbReference type="ChEBI" id="CHEBI:15378"/>
        <dbReference type="ChEBI" id="CHEBI:16526"/>
        <dbReference type="ChEBI" id="CHEBI:16810"/>
        <dbReference type="ChEBI" id="CHEBI:29780"/>
        <dbReference type="ChEBI" id="CHEBI:58818"/>
        <dbReference type="EC" id="2.2.1.9"/>
    </reaction>
</comment>
<comment type="cofactor">
    <cofactor evidence="1">
        <name>Mg(2+)</name>
        <dbReference type="ChEBI" id="CHEBI:18420"/>
    </cofactor>
    <cofactor evidence="1">
        <name>Mn(2+)</name>
        <dbReference type="ChEBI" id="CHEBI:29035"/>
    </cofactor>
</comment>
<comment type="cofactor">
    <cofactor evidence="1">
        <name>thiamine diphosphate</name>
        <dbReference type="ChEBI" id="CHEBI:58937"/>
    </cofactor>
    <text evidence="1">Binds 1 thiamine pyrophosphate per subunit.</text>
</comment>
<comment type="pathway">
    <text evidence="1">Quinol/quinone metabolism; 1,4-dihydroxy-2-naphthoate biosynthesis; 1,4-dihydroxy-2-naphthoate from chorismate: step 2/7.</text>
</comment>
<comment type="pathway">
    <text evidence="1">Quinol/quinone metabolism; menaquinone biosynthesis.</text>
</comment>
<comment type="subunit">
    <text evidence="1">Homodimer.</text>
</comment>
<comment type="similarity">
    <text evidence="1">Belongs to the TPP enzyme family. MenD subfamily.</text>
</comment>
<organism>
    <name type="scientific">Pectobacterium atrosepticum (strain SCRI 1043 / ATCC BAA-672)</name>
    <name type="common">Erwinia carotovora subsp. atroseptica</name>
    <dbReference type="NCBI Taxonomy" id="218491"/>
    <lineage>
        <taxon>Bacteria</taxon>
        <taxon>Pseudomonadati</taxon>
        <taxon>Pseudomonadota</taxon>
        <taxon>Gammaproteobacteria</taxon>
        <taxon>Enterobacterales</taxon>
        <taxon>Pectobacteriaceae</taxon>
        <taxon>Pectobacterium</taxon>
    </lineage>
</organism>
<dbReference type="EC" id="2.2.1.9" evidence="1"/>
<dbReference type="EMBL" id="BX950851">
    <property type="protein sequence ID" value="CAG74121.1"/>
    <property type="molecule type" value="Genomic_DNA"/>
</dbReference>
<dbReference type="RefSeq" id="WP_011092802.1">
    <property type="nucleotide sequence ID" value="NC_004547.2"/>
</dbReference>
<dbReference type="SMR" id="Q6D7W4"/>
<dbReference type="STRING" id="218491.ECA1211"/>
<dbReference type="GeneID" id="57208022"/>
<dbReference type="KEGG" id="eca:ECA1211"/>
<dbReference type="PATRIC" id="fig|218491.5.peg.1231"/>
<dbReference type="eggNOG" id="COG1165">
    <property type="taxonomic scope" value="Bacteria"/>
</dbReference>
<dbReference type="HOGENOM" id="CLU_006051_3_0_6"/>
<dbReference type="OrthoDB" id="9791859at2"/>
<dbReference type="UniPathway" id="UPA00079"/>
<dbReference type="UniPathway" id="UPA01057">
    <property type="reaction ID" value="UER00164"/>
</dbReference>
<dbReference type="Proteomes" id="UP000007966">
    <property type="component" value="Chromosome"/>
</dbReference>
<dbReference type="GO" id="GO:0070204">
    <property type="term" value="F:2-succinyl-5-enolpyruvyl-6-hydroxy-3-cyclohexene-1-carboxylic-acid synthase activity"/>
    <property type="evidence" value="ECO:0007669"/>
    <property type="project" value="UniProtKB-UniRule"/>
</dbReference>
<dbReference type="GO" id="GO:0000287">
    <property type="term" value="F:magnesium ion binding"/>
    <property type="evidence" value="ECO:0007669"/>
    <property type="project" value="UniProtKB-UniRule"/>
</dbReference>
<dbReference type="GO" id="GO:0030145">
    <property type="term" value="F:manganese ion binding"/>
    <property type="evidence" value="ECO:0007669"/>
    <property type="project" value="UniProtKB-UniRule"/>
</dbReference>
<dbReference type="GO" id="GO:0030976">
    <property type="term" value="F:thiamine pyrophosphate binding"/>
    <property type="evidence" value="ECO:0007669"/>
    <property type="project" value="UniProtKB-UniRule"/>
</dbReference>
<dbReference type="GO" id="GO:0009234">
    <property type="term" value="P:menaquinone biosynthetic process"/>
    <property type="evidence" value="ECO:0007669"/>
    <property type="project" value="UniProtKB-UniRule"/>
</dbReference>
<dbReference type="CDD" id="cd07037">
    <property type="entry name" value="TPP_PYR_MenD"/>
    <property type="match status" value="1"/>
</dbReference>
<dbReference type="CDD" id="cd02009">
    <property type="entry name" value="TPP_SHCHC_synthase"/>
    <property type="match status" value="1"/>
</dbReference>
<dbReference type="FunFam" id="3.40.50.970:FF:000029">
    <property type="entry name" value="2-succinyl-5-enolpyruvyl-6-hydroxy-3-cyclohexene-1-carboxylate synthase"/>
    <property type="match status" value="1"/>
</dbReference>
<dbReference type="Gene3D" id="3.40.50.970">
    <property type="match status" value="2"/>
</dbReference>
<dbReference type="Gene3D" id="3.40.50.1220">
    <property type="entry name" value="TPP-binding domain"/>
    <property type="match status" value="1"/>
</dbReference>
<dbReference type="HAMAP" id="MF_01659">
    <property type="entry name" value="MenD"/>
    <property type="match status" value="1"/>
</dbReference>
<dbReference type="InterPro" id="IPR029035">
    <property type="entry name" value="DHS-like_NAD/FAD-binding_dom"/>
</dbReference>
<dbReference type="InterPro" id="IPR004433">
    <property type="entry name" value="MenaQ_synth_MenD"/>
</dbReference>
<dbReference type="InterPro" id="IPR032264">
    <property type="entry name" value="MenD_middle"/>
</dbReference>
<dbReference type="InterPro" id="IPR029061">
    <property type="entry name" value="THDP-binding"/>
</dbReference>
<dbReference type="InterPro" id="IPR012001">
    <property type="entry name" value="Thiamin_PyroP_enz_TPP-bd_dom"/>
</dbReference>
<dbReference type="InterPro" id="IPR011766">
    <property type="entry name" value="TPP_enzyme_TPP-bd"/>
</dbReference>
<dbReference type="NCBIfam" id="TIGR00173">
    <property type="entry name" value="menD"/>
    <property type="match status" value="1"/>
</dbReference>
<dbReference type="PANTHER" id="PTHR42916">
    <property type="entry name" value="2-SUCCINYL-5-ENOLPYRUVYL-6-HYDROXY-3-CYCLOHEXENE-1-CARBOXYLATE SYNTHASE"/>
    <property type="match status" value="1"/>
</dbReference>
<dbReference type="PANTHER" id="PTHR42916:SF1">
    <property type="entry name" value="PROTEIN PHYLLO, CHLOROPLASTIC"/>
    <property type="match status" value="1"/>
</dbReference>
<dbReference type="Pfam" id="PF02775">
    <property type="entry name" value="TPP_enzyme_C"/>
    <property type="match status" value="1"/>
</dbReference>
<dbReference type="Pfam" id="PF16582">
    <property type="entry name" value="TPP_enzyme_M_2"/>
    <property type="match status" value="1"/>
</dbReference>
<dbReference type="Pfam" id="PF02776">
    <property type="entry name" value="TPP_enzyme_N"/>
    <property type="match status" value="1"/>
</dbReference>
<dbReference type="PIRSF" id="PIRSF004983">
    <property type="entry name" value="MenD"/>
    <property type="match status" value="1"/>
</dbReference>
<dbReference type="SUPFAM" id="SSF52467">
    <property type="entry name" value="DHS-like NAD/FAD-binding domain"/>
    <property type="match status" value="1"/>
</dbReference>
<dbReference type="SUPFAM" id="SSF52518">
    <property type="entry name" value="Thiamin diphosphate-binding fold (THDP-binding)"/>
    <property type="match status" value="2"/>
</dbReference>
<protein>
    <recommendedName>
        <fullName evidence="1">2-succinyl-5-enolpyruvyl-6-hydroxy-3-cyclohexene-1-carboxylate synthase</fullName>
        <shortName evidence="1">SEPHCHC synthase</shortName>
        <ecNumber evidence="1">2.2.1.9</ecNumber>
    </recommendedName>
    <alternativeName>
        <fullName evidence="1">Menaquinone biosynthesis protein MenD</fullName>
    </alternativeName>
</protein>
<proteinExistence type="inferred from homology"/>
<accession>Q6D7W4</accession>
<reference key="1">
    <citation type="journal article" date="2004" name="Proc. Natl. Acad. Sci. U.S.A.">
        <title>Genome sequence of the enterobacterial phytopathogen Erwinia carotovora subsp. atroseptica and characterization of virulence factors.</title>
        <authorList>
            <person name="Bell K.S."/>
            <person name="Sebaihia M."/>
            <person name="Pritchard L."/>
            <person name="Holden M.T.G."/>
            <person name="Hyman L.J."/>
            <person name="Holeva M.C."/>
            <person name="Thomson N.R."/>
            <person name="Bentley S.D."/>
            <person name="Churcher L.J.C."/>
            <person name="Mungall K."/>
            <person name="Atkin R."/>
            <person name="Bason N."/>
            <person name="Brooks K."/>
            <person name="Chillingworth T."/>
            <person name="Clark K."/>
            <person name="Doggett J."/>
            <person name="Fraser A."/>
            <person name="Hance Z."/>
            <person name="Hauser H."/>
            <person name="Jagels K."/>
            <person name="Moule S."/>
            <person name="Norbertczak H."/>
            <person name="Ormond D."/>
            <person name="Price C."/>
            <person name="Quail M.A."/>
            <person name="Sanders M."/>
            <person name="Walker D."/>
            <person name="Whitehead S."/>
            <person name="Salmond G.P.C."/>
            <person name="Birch P.R.J."/>
            <person name="Parkhill J."/>
            <person name="Toth I.K."/>
        </authorList>
    </citation>
    <scope>NUCLEOTIDE SEQUENCE [LARGE SCALE GENOMIC DNA]</scope>
    <source>
        <strain>SCRI 1043 / ATCC BAA-672</strain>
    </source>
</reference>